<evidence type="ECO:0000255" key="1">
    <source>
        <dbReference type="HAMAP-Rule" id="MF_01576"/>
    </source>
</evidence>
<feature type="chain" id="PRO_1000069235" description="Bifunctional protein FolD">
    <location>
        <begin position="1"/>
        <end position="282"/>
    </location>
</feature>
<feature type="binding site" evidence="1">
    <location>
        <begin position="164"/>
        <end position="166"/>
    </location>
    <ligand>
        <name>NADP(+)</name>
        <dbReference type="ChEBI" id="CHEBI:58349"/>
    </ligand>
</feature>
<feature type="binding site" evidence="1">
    <location>
        <position position="189"/>
    </location>
    <ligand>
        <name>NADP(+)</name>
        <dbReference type="ChEBI" id="CHEBI:58349"/>
    </ligand>
</feature>
<feature type="binding site" evidence="1">
    <location>
        <position position="230"/>
    </location>
    <ligand>
        <name>NADP(+)</name>
        <dbReference type="ChEBI" id="CHEBI:58349"/>
    </ligand>
</feature>
<proteinExistence type="inferred from homology"/>
<comment type="function">
    <text evidence="1">Catalyzes the oxidation of 5,10-methylenetetrahydrofolate to 5,10-methenyltetrahydrofolate and then the hydrolysis of 5,10-methenyltetrahydrofolate to 10-formyltetrahydrofolate.</text>
</comment>
<comment type="catalytic activity">
    <reaction evidence="1">
        <text>(6R)-5,10-methylene-5,6,7,8-tetrahydrofolate + NADP(+) = (6R)-5,10-methenyltetrahydrofolate + NADPH</text>
        <dbReference type="Rhea" id="RHEA:22812"/>
        <dbReference type="ChEBI" id="CHEBI:15636"/>
        <dbReference type="ChEBI" id="CHEBI:57455"/>
        <dbReference type="ChEBI" id="CHEBI:57783"/>
        <dbReference type="ChEBI" id="CHEBI:58349"/>
        <dbReference type="EC" id="1.5.1.5"/>
    </reaction>
</comment>
<comment type="catalytic activity">
    <reaction evidence="1">
        <text>(6R)-5,10-methenyltetrahydrofolate + H2O = (6R)-10-formyltetrahydrofolate + H(+)</text>
        <dbReference type="Rhea" id="RHEA:23700"/>
        <dbReference type="ChEBI" id="CHEBI:15377"/>
        <dbReference type="ChEBI" id="CHEBI:15378"/>
        <dbReference type="ChEBI" id="CHEBI:57455"/>
        <dbReference type="ChEBI" id="CHEBI:195366"/>
        <dbReference type="EC" id="3.5.4.9"/>
    </reaction>
</comment>
<comment type="pathway">
    <text evidence="1">One-carbon metabolism; tetrahydrofolate interconversion.</text>
</comment>
<comment type="subunit">
    <text evidence="1">Homodimer.</text>
</comment>
<comment type="similarity">
    <text evidence="1">Belongs to the tetrahydrofolate dehydrogenase/cyclohydrolase family.</text>
</comment>
<accession>A7H3N3</accession>
<dbReference type="EC" id="1.5.1.5" evidence="1"/>
<dbReference type="EC" id="3.5.4.9" evidence="1"/>
<dbReference type="EMBL" id="CP000768">
    <property type="protein sequence ID" value="ABS44617.1"/>
    <property type="molecule type" value="Genomic_DNA"/>
</dbReference>
<dbReference type="SMR" id="A7H3N3"/>
<dbReference type="KEGG" id="cjd:JJD26997_1004"/>
<dbReference type="HOGENOM" id="CLU_034045_2_1_7"/>
<dbReference type="UniPathway" id="UPA00193"/>
<dbReference type="Proteomes" id="UP000002302">
    <property type="component" value="Chromosome"/>
</dbReference>
<dbReference type="GO" id="GO:0005829">
    <property type="term" value="C:cytosol"/>
    <property type="evidence" value="ECO:0007669"/>
    <property type="project" value="TreeGrafter"/>
</dbReference>
<dbReference type="GO" id="GO:0004477">
    <property type="term" value="F:methenyltetrahydrofolate cyclohydrolase activity"/>
    <property type="evidence" value="ECO:0007669"/>
    <property type="project" value="UniProtKB-UniRule"/>
</dbReference>
<dbReference type="GO" id="GO:0004488">
    <property type="term" value="F:methylenetetrahydrofolate dehydrogenase (NADP+) activity"/>
    <property type="evidence" value="ECO:0007669"/>
    <property type="project" value="UniProtKB-UniRule"/>
</dbReference>
<dbReference type="GO" id="GO:0000105">
    <property type="term" value="P:L-histidine biosynthetic process"/>
    <property type="evidence" value="ECO:0007669"/>
    <property type="project" value="UniProtKB-KW"/>
</dbReference>
<dbReference type="GO" id="GO:0009086">
    <property type="term" value="P:methionine biosynthetic process"/>
    <property type="evidence" value="ECO:0007669"/>
    <property type="project" value="UniProtKB-KW"/>
</dbReference>
<dbReference type="GO" id="GO:0006164">
    <property type="term" value="P:purine nucleotide biosynthetic process"/>
    <property type="evidence" value="ECO:0007669"/>
    <property type="project" value="UniProtKB-KW"/>
</dbReference>
<dbReference type="GO" id="GO:0035999">
    <property type="term" value="P:tetrahydrofolate interconversion"/>
    <property type="evidence" value="ECO:0007669"/>
    <property type="project" value="UniProtKB-UniRule"/>
</dbReference>
<dbReference type="CDD" id="cd01080">
    <property type="entry name" value="NAD_bind_m-THF_DH_Cyclohyd"/>
    <property type="match status" value="1"/>
</dbReference>
<dbReference type="FunFam" id="3.40.50.720:FF:000094">
    <property type="entry name" value="Bifunctional protein FolD"/>
    <property type="match status" value="1"/>
</dbReference>
<dbReference type="FunFam" id="3.40.50.10860:FF:000005">
    <property type="entry name" value="C-1-tetrahydrofolate synthase, cytoplasmic, putative"/>
    <property type="match status" value="1"/>
</dbReference>
<dbReference type="Gene3D" id="3.40.50.10860">
    <property type="entry name" value="Leucine Dehydrogenase, chain A, domain 1"/>
    <property type="match status" value="1"/>
</dbReference>
<dbReference type="Gene3D" id="3.40.50.720">
    <property type="entry name" value="NAD(P)-binding Rossmann-like Domain"/>
    <property type="match status" value="1"/>
</dbReference>
<dbReference type="HAMAP" id="MF_01576">
    <property type="entry name" value="THF_DHG_CYH"/>
    <property type="match status" value="1"/>
</dbReference>
<dbReference type="InterPro" id="IPR046346">
    <property type="entry name" value="Aminoacid_DH-like_N_sf"/>
</dbReference>
<dbReference type="InterPro" id="IPR036291">
    <property type="entry name" value="NAD(P)-bd_dom_sf"/>
</dbReference>
<dbReference type="InterPro" id="IPR000672">
    <property type="entry name" value="THF_DH/CycHdrlase"/>
</dbReference>
<dbReference type="InterPro" id="IPR020630">
    <property type="entry name" value="THF_DH/CycHdrlase_cat_dom"/>
</dbReference>
<dbReference type="InterPro" id="IPR020867">
    <property type="entry name" value="THF_DH/CycHdrlase_CS"/>
</dbReference>
<dbReference type="InterPro" id="IPR020631">
    <property type="entry name" value="THF_DH/CycHdrlase_NAD-bd_dom"/>
</dbReference>
<dbReference type="NCBIfam" id="NF008058">
    <property type="entry name" value="PRK10792.1"/>
    <property type="match status" value="1"/>
</dbReference>
<dbReference type="NCBIfam" id="NF010763">
    <property type="entry name" value="PRK14166.1"/>
    <property type="match status" value="1"/>
</dbReference>
<dbReference type="NCBIfam" id="NF010783">
    <property type="entry name" value="PRK14186.1"/>
    <property type="match status" value="1"/>
</dbReference>
<dbReference type="NCBIfam" id="NF010787">
    <property type="entry name" value="PRK14191.1"/>
    <property type="match status" value="1"/>
</dbReference>
<dbReference type="PANTHER" id="PTHR48099:SF5">
    <property type="entry name" value="C-1-TETRAHYDROFOLATE SYNTHASE, CYTOPLASMIC"/>
    <property type="match status" value="1"/>
</dbReference>
<dbReference type="PANTHER" id="PTHR48099">
    <property type="entry name" value="C-1-TETRAHYDROFOLATE SYNTHASE, CYTOPLASMIC-RELATED"/>
    <property type="match status" value="1"/>
</dbReference>
<dbReference type="Pfam" id="PF00763">
    <property type="entry name" value="THF_DHG_CYH"/>
    <property type="match status" value="1"/>
</dbReference>
<dbReference type="Pfam" id="PF02882">
    <property type="entry name" value="THF_DHG_CYH_C"/>
    <property type="match status" value="1"/>
</dbReference>
<dbReference type="PRINTS" id="PR00085">
    <property type="entry name" value="THFDHDRGNASE"/>
</dbReference>
<dbReference type="SUPFAM" id="SSF53223">
    <property type="entry name" value="Aminoacid dehydrogenase-like, N-terminal domain"/>
    <property type="match status" value="1"/>
</dbReference>
<dbReference type="SUPFAM" id="SSF51735">
    <property type="entry name" value="NAD(P)-binding Rossmann-fold domains"/>
    <property type="match status" value="1"/>
</dbReference>
<dbReference type="PROSITE" id="PS00766">
    <property type="entry name" value="THF_DHG_CYH_1"/>
    <property type="match status" value="1"/>
</dbReference>
<gene>
    <name evidence="1" type="primary">folD</name>
    <name type="ordered locus">JJD26997_1004</name>
</gene>
<organism>
    <name type="scientific">Campylobacter jejuni subsp. doylei (strain ATCC BAA-1458 / RM4099 / 269.97)</name>
    <dbReference type="NCBI Taxonomy" id="360109"/>
    <lineage>
        <taxon>Bacteria</taxon>
        <taxon>Pseudomonadati</taxon>
        <taxon>Campylobacterota</taxon>
        <taxon>Epsilonproteobacteria</taxon>
        <taxon>Campylobacterales</taxon>
        <taxon>Campylobacteraceae</taxon>
        <taxon>Campylobacter</taxon>
    </lineage>
</organism>
<sequence length="282" mass="30382">MTLLDGKALSAKIKEELKEKNQFLKSKGIESCLAVILVGNNPASQTYVKSKAKACEECGIKSLVYHLNENTTQNELLALINTLNHDDSVHGILVQLPLPDHICKDLILESIISSKDVDGFHPINVGYLNLGLESGFLPCTPLGVMKLLKAYEIDLKGKDAVIIGASNIVGRPMATMLLNAGATVSVCHIKTKDLSLYTRQADLIIVAAGCVNLLRSDMVKEGVIVVDVGINRLESGKIVGDVDFEEVSKKSSYITPVPCGVGPMTIAMLLENTVKSAKNRLN</sequence>
<protein>
    <recommendedName>
        <fullName evidence="1">Bifunctional protein FolD</fullName>
    </recommendedName>
    <domain>
        <recommendedName>
            <fullName evidence="1">Methylenetetrahydrofolate dehydrogenase</fullName>
            <ecNumber evidence="1">1.5.1.5</ecNumber>
        </recommendedName>
    </domain>
    <domain>
        <recommendedName>
            <fullName evidence="1">Methenyltetrahydrofolate cyclohydrolase</fullName>
            <ecNumber evidence="1">3.5.4.9</ecNumber>
        </recommendedName>
    </domain>
</protein>
<name>FOLD_CAMJD</name>
<reference key="1">
    <citation type="submission" date="2007-07" db="EMBL/GenBank/DDBJ databases">
        <title>Complete genome sequence of Campylobacter jejuni subsp doylei 269.97 isolated from human blood.</title>
        <authorList>
            <person name="Fouts D.E."/>
            <person name="Mongodin E.F."/>
            <person name="Puiu D."/>
            <person name="Sebastian Y."/>
            <person name="Miller W.G."/>
            <person name="Mandrell R.E."/>
            <person name="Lastovica A.J."/>
            <person name="Nelson K.E."/>
        </authorList>
    </citation>
    <scope>NUCLEOTIDE SEQUENCE [LARGE SCALE GENOMIC DNA]</scope>
    <source>
        <strain>ATCC BAA-1458 / RM4099 / 269.97</strain>
    </source>
</reference>
<keyword id="KW-0028">Amino-acid biosynthesis</keyword>
<keyword id="KW-0368">Histidine biosynthesis</keyword>
<keyword id="KW-0378">Hydrolase</keyword>
<keyword id="KW-0486">Methionine biosynthesis</keyword>
<keyword id="KW-0511">Multifunctional enzyme</keyword>
<keyword id="KW-0521">NADP</keyword>
<keyword id="KW-0554">One-carbon metabolism</keyword>
<keyword id="KW-0560">Oxidoreductase</keyword>
<keyword id="KW-0658">Purine biosynthesis</keyword>